<gene>
    <name evidence="2" type="primary">rpsL</name>
    <name type="ordered locus">Swoo_4695</name>
</gene>
<name>RS12_SHEWM</name>
<sequence length="124" mass="13648">MATVNQLVRKPRAPKVDKTNVPALNACPQKRGVCTRVYTTTPKKPNSALRKVARVRLTNGFEVTSYIGGEGHNLQEHSVILIRGGRVKDLPGVRYHTVRGALDCAGVSERRQGRSKYGAKRPKS</sequence>
<reference key="1">
    <citation type="submission" date="2008-02" db="EMBL/GenBank/DDBJ databases">
        <title>Complete sequence of Shewanella woodyi ATCC 51908.</title>
        <authorList>
            <consortium name="US DOE Joint Genome Institute"/>
            <person name="Copeland A."/>
            <person name="Lucas S."/>
            <person name="Lapidus A."/>
            <person name="Glavina del Rio T."/>
            <person name="Dalin E."/>
            <person name="Tice H."/>
            <person name="Bruce D."/>
            <person name="Goodwin L."/>
            <person name="Pitluck S."/>
            <person name="Sims D."/>
            <person name="Brettin T."/>
            <person name="Detter J.C."/>
            <person name="Han C."/>
            <person name="Kuske C.R."/>
            <person name="Schmutz J."/>
            <person name="Larimer F."/>
            <person name="Land M."/>
            <person name="Hauser L."/>
            <person name="Kyrpides N."/>
            <person name="Lykidis A."/>
            <person name="Zhao J.-S."/>
            <person name="Richardson P."/>
        </authorList>
    </citation>
    <scope>NUCLEOTIDE SEQUENCE [LARGE SCALE GENOMIC DNA]</scope>
    <source>
        <strain>ATCC 51908 / MS32</strain>
    </source>
</reference>
<protein>
    <recommendedName>
        <fullName evidence="2">Small ribosomal subunit protein uS12</fullName>
    </recommendedName>
    <alternativeName>
        <fullName evidence="3">30S ribosomal protein S12</fullName>
    </alternativeName>
</protein>
<dbReference type="EMBL" id="CP000961">
    <property type="protein sequence ID" value="ACA88945.1"/>
    <property type="molecule type" value="Genomic_DNA"/>
</dbReference>
<dbReference type="RefSeq" id="WP_012327264.1">
    <property type="nucleotide sequence ID" value="NC_010506.1"/>
</dbReference>
<dbReference type="SMR" id="B1KMY8"/>
<dbReference type="STRING" id="392500.Swoo_4695"/>
<dbReference type="KEGG" id="swd:Swoo_4695"/>
<dbReference type="eggNOG" id="COG0048">
    <property type="taxonomic scope" value="Bacteria"/>
</dbReference>
<dbReference type="HOGENOM" id="CLU_104295_1_2_6"/>
<dbReference type="Proteomes" id="UP000002168">
    <property type="component" value="Chromosome"/>
</dbReference>
<dbReference type="GO" id="GO:0015935">
    <property type="term" value="C:small ribosomal subunit"/>
    <property type="evidence" value="ECO:0007669"/>
    <property type="project" value="InterPro"/>
</dbReference>
<dbReference type="GO" id="GO:0019843">
    <property type="term" value="F:rRNA binding"/>
    <property type="evidence" value="ECO:0007669"/>
    <property type="project" value="UniProtKB-UniRule"/>
</dbReference>
<dbReference type="GO" id="GO:0003735">
    <property type="term" value="F:structural constituent of ribosome"/>
    <property type="evidence" value="ECO:0007669"/>
    <property type="project" value="InterPro"/>
</dbReference>
<dbReference type="GO" id="GO:0000049">
    <property type="term" value="F:tRNA binding"/>
    <property type="evidence" value="ECO:0007669"/>
    <property type="project" value="UniProtKB-UniRule"/>
</dbReference>
<dbReference type="GO" id="GO:0006412">
    <property type="term" value="P:translation"/>
    <property type="evidence" value="ECO:0007669"/>
    <property type="project" value="UniProtKB-UniRule"/>
</dbReference>
<dbReference type="CDD" id="cd03368">
    <property type="entry name" value="Ribosomal_S12"/>
    <property type="match status" value="1"/>
</dbReference>
<dbReference type="FunFam" id="2.40.50.140:FF:000001">
    <property type="entry name" value="30S ribosomal protein S12"/>
    <property type="match status" value="1"/>
</dbReference>
<dbReference type="Gene3D" id="2.40.50.140">
    <property type="entry name" value="Nucleic acid-binding proteins"/>
    <property type="match status" value="1"/>
</dbReference>
<dbReference type="HAMAP" id="MF_00403_B">
    <property type="entry name" value="Ribosomal_uS12_B"/>
    <property type="match status" value="1"/>
</dbReference>
<dbReference type="InterPro" id="IPR012340">
    <property type="entry name" value="NA-bd_OB-fold"/>
</dbReference>
<dbReference type="InterPro" id="IPR006032">
    <property type="entry name" value="Ribosomal_uS12"/>
</dbReference>
<dbReference type="InterPro" id="IPR005679">
    <property type="entry name" value="Ribosomal_uS12_bac"/>
</dbReference>
<dbReference type="NCBIfam" id="TIGR00981">
    <property type="entry name" value="rpsL_bact"/>
    <property type="match status" value="1"/>
</dbReference>
<dbReference type="PANTHER" id="PTHR11652">
    <property type="entry name" value="30S RIBOSOMAL PROTEIN S12 FAMILY MEMBER"/>
    <property type="match status" value="1"/>
</dbReference>
<dbReference type="Pfam" id="PF00164">
    <property type="entry name" value="Ribosom_S12_S23"/>
    <property type="match status" value="1"/>
</dbReference>
<dbReference type="PIRSF" id="PIRSF002133">
    <property type="entry name" value="Ribosomal_S12/S23"/>
    <property type="match status" value="1"/>
</dbReference>
<dbReference type="PRINTS" id="PR01034">
    <property type="entry name" value="RIBOSOMALS12"/>
</dbReference>
<dbReference type="SUPFAM" id="SSF50249">
    <property type="entry name" value="Nucleic acid-binding proteins"/>
    <property type="match status" value="1"/>
</dbReference>
<dbReference type="PROSITE" id="PS00055">
    <property type="entry name" value="RIBOSOMAL_S12"/>
    <property type="match status" value="1"/>
</dbReference>
<feature type="chain" id="PRO_1000123518" description="Small ribosomal subunit protein uS12">
    <location>
        <begin position="1"/>
        <end position="124"/>
    </location>
</feature>
<feature type="modified residue" description="3-methylthioaspartic acid" evidence="1">
    <location>
        <position position="89"/>
    </location>
</feature>
<proteinExistence type="inferred from homology"/>
<keyword id="KW-0488">Methylation</keyword>
<keyword id="KW-1185">Reference proteome</keyword>
<keyword id="KW-0687">Ribonucleoprotein</keyword>
<keyword id="KW-0689">Ribosomal protein</keyword>
<keyword id="KW-0694">RNA-binding</keyword>
<keyword id="KW-0699">rRNA-binding</keyword>
<keyword id="KW-0820">tRNA-binding</keyword>
<accession>B1KMY8</accession>
<evidence type="ECO:0000250" key="1"/>
<evidence type="ECO:0000255" key="2">
    <source>
        <dbReference type="HAMAP-Rule" id="MF_00403"/>
    </source>
</evidence>
<evidence type="ECO:0000305" key="3"/>
<organism>
    <name type="scientific">Shewanella woodyi (strain ATCC 51908 / MS32)</name>
    <dbReference type="NCBI Taxonomy" id="392500"/>
    <lineage>
        <taxon>Bacteria</taxon>
        <taxon>Pseudomonadati</taxon>
        <taxon>Pseudomonadota</taxon>
        <taxon>Gammaproteobacteria</taxon>
        <taxon>Alteromonadales</taxon>
        <taxon>Shewanellaceae</taxon>
        <taxon>Shewanella</taxon>
    </lineage>
</organism>
<comment type="function">
    <text evidence="2">With S4 and S5 plays an important role in translational accuracy.</text>
</comment>
<comment type="function">
    <text evidence="2">Interacts with and stabilizes bases of the 16S rRNA that are involved in tRNA selection in the A site and with the mRNA backbone. Located at the interface of the 30S and 50S subunits, it traverses the body of the 30S subunit contacting proteins on the other side and probably holding the rRNA structure together. The combined cluster of proteins S8, S12 and S17 appears to hold together the shoulder and platform of the 30S subunit.</text>
</comment>
<comment type="subunit">
    <text evidence="2">Part of the 30S ribosomal subunit. Contacts proteins S8 and S17. May interact with IF1 in the 30S initiation complex.</text>
</comment>
<comment type="similarity">
    <text evidence="2">Belongs to the universal ribosomal protein uS12 family.</text>
</comment>